<gene>
    <name evidence="1" type="primary">psaB</name>
</gene>
<dbReference type="EC" id="1.97.1.12" evidence="1"/>
<dbReference type="EMBL" id="AY835431">
    <property type="protein sequence ID" value="AAV80696.1"/>
    <property type="molecule type" value="Genomic_DNA"/>
</dbReference>
<dbReference type="RefSeq" id="YP_636274.1">
    <property type="nucleotide sequence ID" value="NC_008114.1"/>
</dbReference>
<dbReference type="SMR" id="Q3ZIZ3"/>
<dbReference type="GeneID" id="4108769"/>
<dbReference type="GO" id="GO:0009535">
    <property type="term" value="C:chloroplast thylakoid membrane"/>
    <property type="evidence" value="ECO:0007669"/>
    <property type="project" value="UniProtKB-SubCell"/>
</dbReference>
<dbReference type="GO" id="GO:0009522">
    <property type="term" value="C:photosystem I"/>
    <property type="evidence" value="ECO:0007669"/>
    <property type="project" value="UniProtKB-KW"/>
</dbReference>
<dbReference type="GO" id="GO:0051539">
    <property type="term" value="F:4 iron, 4 sulfur cluster binding"/>
    <property type="evidence" value="ECO:0007669"/>
    <property type="project" value="UniProtKB-KW"/>
</dbReference>
<dbReference type="GO" id="GO:0016168">
    <property type="term" value="F:chlorophyll binding"/>
    <property type="evidence" value="ECO:0007669"/>
    <property type="project" value="UniProtKB-KW"/>
</dbReference>
<dbReference type="GO" id="GO:0009055">
    <property type="term" value="F:electron transfer activity"/>
    <property type="evidence" value="ECO:0007669"/>
    <property type="project" value="UniProtKB-UniRule"/>
</dbReference>
<dbReference type="GO" id="GO:0000287">
    <property type="term" value="F:magnesium ion binding"/>
    <property type="evidence" value="ECO:0007669"/>
    <property type="project" value="UniProtKB-UniRule"/>
</dbReference>
<dbReference type="GO" id="GO:0016491">
    <property type="term" value="F:oxidoreductase activity"/>
    <property type="evidence" value="ECO:0007669"/>
    <property type="project" value="UniProtKB-KW"/>
</dbReference>
<dbReference type="GO" id="GO:0015979">
    <property type="term" value="P:photosynthesis"/>
    <property type="evidence" value="ECO:0007669"/>
    <property type="project" value="UniProtKB-UniRule"/>
</dbReference>
<dbReference type="FunFam" id="1.20.1130.10:FF:000001">
    <property type="entry name" value="Photosystem I P700 chlorophyll a apoprotein A2"/>
    <property type="match status" value="1"/>
</dbReference>
<dbReference type="Gene3D" id="1.20.1130.10">
    <property type="entry name" value="Photosystem I PsaA/PsaB"/>
    <property type="match status" value="1"/>
</dbReference>
<dbReference type="HAMAP" id="MF_00482">
    <property type="entry name" value="PSI_PsaB"/>
    <property type="match status" value="1"/>
</dbReference>
<dbReference type="InterPro" id="IPR001280">
    <property type="entry name" value="PSI_PsaA/B"/>
</dbReference>
<dbReference type="InterPro" id="IPR020586">
    <property type="entry name" value="PSI_PsaA/B_CS"/>
</dbReference>
<dbReference type="InterPro" id="IPR036408">
    <property type="entry name" value="PSI_PsaA/B_sf"/>
</dbReference>
<dbReference type="InterPro" id="IPR006244">
    <property type="entry name" value="PSI_PsaB"/>
</dbReference>
<dbReference type="NCBIfam" id="TIGR01336">
    <property type="entry name" value="psaB"/>
    <property type="match status" value="1"/>
</dbReference>
<dbReference type="PANTHER" id="PTHR30128">
    <property type="entry name" value="OUTER MEMBRANE PROTEIN, OMPA-RELATED"/>
    <property type="match status" value="1"/>
</dbReference>
<dbReference type="PANTHER" id="PTHR30128:SF19">
    <property type="entry name" value="PHOTOSYSTEM I P700 CHLOROPHYLL A APOPROTEIN A1-RELATED"/>
    <property type="match status" value="1"/>
</dbReference>
<dbReference type="Pfam" id="PF00223">
    <property type="entry name" value="PsaA_PsaB"/>
    <property type="match status" value="1"/>
</dbReference>
<dbReference type="PIRSF" id="PIRSF002905">
    <property type="entry name" value="PSI_A"/>
    <property type="match status" value="1"/>
</dbReference>
<dbReference type="PRINTS" id="PR00257">
    <property type="entry name" value="PHOTSYSPSAAB"/>
</dbReference>
<dbReference type="SUPFAM" id="SSF81558">
    <property type="entry name" value="Photosystem I subunits PsaA/PsaB"/>
    <property type="match status" value="1"/>
</dbReference>
<dbReference type="PROSITE" id="PS00419">
    <property type="entry name" value="PHOTOSYSTEM_I_PSAAB"/>
    <property type="match status" value="1"/>
</dbReference>
<name>PSAB_TUPAK</name>
<feature type="chain" id="PRO_0000277130" description="Photosystem I P700 chlorophyll a apoprotein A2">
    <location>
        <begin position="1"/>
        <end position="735"/>
    </location>
</feature>
<feature type="transmembrane region" description="Helical; Name=I" evidence="1">
    <location>
        <begin position="47"/>
        <end position="70"/>
    </location>
</feature>
<feature type="transmembrane region" description="Helical; Name=II" evidence="1">
    <location>
        <begin position="136"/>
        <end position="159"/>
    </location>
</feature>
<feature type="transmembrane region" description="Helical; Name=III" evidence="1">
    <location>
        <begin position="176"/>
        <end position="200"/>
    </location>
</feature>
<feature type="transmembrane region" description="Helical; Name=IV" evidence="1">
    <location>
        <begin position="274"/>
        <end position="292"/>
    </location>
</feature>
<feature type="transmembrane region" description="Helical; Name=V" evidence="1">
    <location>
        <begin position="331"/>
        <end position="354"/>
    </location>
</feature>
<feature type="transmembrane region" description="Helical; Name=VI" evidence="1">
    <location>
        <begin position="370"/>
        <end position="396"/>
    </location>
</feature>
<feature type="transmembrane region" description="Helical; Name=VII" evidence="1">
    <location>
        <begin position="418"/>
        <end position="440"/>
    </location>
</feature>
<feature type="transmembrane region" description="Helical; Name=VIII" evidence="1">
    <location>
        <begin position="518"/>
        <end position="536"/>
    </location>
</feature>
<feature type="transmembrane region" description="Helical; Name=IX" evidence="1">
    <location>
        <begin position="576"/>
        <end position="597"/>
    </location>
</feature>
<feature type="transmembrane region" description="Helical; Name=X" evidence="1">
    <location>
        <begin position="644"/>
        <end position="666"/>
    </location>
</feature>
<feature type="transmembrane region" description="Helical; Name=XI" evidence="1">
    <location>
        <begin position="708"/>
        <end position="728"/>
    </location>
</feature>
<feature type="binding site" evidence="1">
    <location>
        <position position="560"/>
    </location>
    <ligand>
        <name>[4Fe-4S] cluster</name>
        <dbReference type="ChEBI" id="CHEBI:49883"/>
        <note>ligand shared between dimeric partners</note>
    </ligand>
</feature>
<feature type="binding site" evidence="1">
    <location>
        <position position="569"/>
    </location>
    <ligand>
        <name>[4Fe-4S] cluster</name>
        <dbReference type="ChEBI" id="CHEBI:49883"/>
        <note>ligand shared between dimeric partners</note>
    </ligand>
</feature>
<feature type="binding site" description="axial binding residue" evidence="1">
    <location>
        <position position="655"/>
    </location>
    <ligand>
        <name>chlorophyll a</name>
        <dbReference type="ChEBI" id="CHEBI:58416"/>
        <label>B1</label>
    </ligand>
    <ligandPart>
        <name>Mg</name>
        <dbReference type="ChEBI" id="CHEBI:25107"/>
    </ligandPart>
</feature>
<feature type="binding site" description="axial binding residue" evidence="1">
    <location>
        <position position="663"/>
    </location>
    <ligand>
        <name>chlorophyll a</name>
        <dbReference type="ChEBI" id="CHEBI:58416"/>
        <label>B3</label>
    </ligand>
    <ligandPart>
        <name>Mg</name>
        <dbReference type="ChEBI" id="CHEBI:25107"/>
    </ligandPart>
</feature>
<feature type="binding site" evidence="1">
    <location>
        <position position="671"/>
    </location>
    <ligand>
        <name>chlorophyll a</name>
        <dbReference type="ChEBI" id="CHEBI:58416"/>
        <label>B3</label>
    </ligand>
</feature>
<feature type="binding site" evidence="1">
    <location>
        <position position="672"/>
    </location>
    <ligand>
        <name>phylloquinone</name>
        <dbReference type="ChEBI" id="CHEBI:18067"/>
        <label>B</label>
    </ligand>
</feature>
<reference key="1">
    <citation type="journal article" date="2005" name="Mol. Biol. Evol.">
        <title>The chloroplast genome sequence of the green alga Pseudendoclonium akinetum (Ulvophyceae) reveals unusual structural features and new insights into the branching order of chlorophyte lineages.</title>
        <authorList>
            <person name="Pombert J.-F."/>
            <person name="Otis C."/>
            <person name="Lemieux C."/>
            <person name="Turmel M."/>
        </authorList>
    </citation>
    <scope>NUCLEOTIDE SEQUENCE [LARGE SCALE GENOMIC DNA]</scope>
    <source>
        <strain>UTEX 1912</strain>
    </source>
</reference>
<keyword id="KW-0004">4Fe-4S</keyword>
<keyword id="KW-0148">Chlorophyll</keyword>
<keyword id="KW-0150">Chloroplast</keyword>
<keyword id="KW-0157">Chromophore</keyword>
<keyword id="KW-0249">Electron transport</keyword>
<keyword id="KW-0408">Iron</keyword>
<keyword id="KW-0411">Iron-sulfur</keyword>
<keyword id="KW-0460">Magnesium</keyword>
<keyword id="KW-0472">Membrane</keyword>
<keyword id="KW-0479">Metal-binding</keyword>
<keyword id="KW-0560">Oxidoreductase</keyword>
<keyword id="KW-0602">Photosynthesis</keyword>
<keyword id="KW-0603">Photosystem I</keyword>
<keyword id="KW-0934">Plastid</keyword>
<keyword id="KW-0793">Thylakoid</keyword>
<keyword id="KW-0812">Transmembrane</keyword>
<keyword id="KW-1133">Transmembrane helix</keyword>
<keyword id="KW-0813">Transport</keyword>
<sequence>MATTKFPKFSQGLANDPTTRRIWFGIATAHDFENHDGMTEENLYQKIFASHFGQLAIIFLWTSGNLFHVAWQGNFEQWVQSPLNVRPIAHAIWDPHFGQPAVEAFTRGGASGPVNISTSGVYQWWYTIGMRTNQDLYIGSIFLSFAATAFLFAGWLHLQPKFQPGLSWFKNAESRLNHHLSGLFGVSSLAWTGHLIHVAIPEARGQHVRWDNFLTTLPHPQGLTPFFTGNWAAYAENPDTASHLFGTSEGSGTAILTFLGGFHPQTQSLWLSDMAHHHLAIAVLFIVAGHMYRTNFGIGHSMREILEAHKAPSGNLGNGHTGLFDTVNNSLHFQLGLALASVGTICSLVAQHMYSLPPYAFLAQDFTTQASLYTHHQYIAGFILCGAFAHGAIFFIRDYDPEANKGNVLARMLEHKEAIISHLSWVSLFLGFHTLGLYVHNDVMQAFGTPEKQILIEPVFAQWIQASHGKTAYGFDLLLSQSTSNAYAAGQSLWLPGWLEAINNNNNSLFLTIGPGDFLVHHAIALGLHTTTLILVKGALDARGSKLMPDKKDFGYSFPCDGPGRGGTCDISAWDAFYLAVFWMLNTIGWVTFYFHWKHLGIWQGNVSQFNESSTYLMGWLRDYLWLNSSQLINGYNPFGMNSLSVWSWMFLFGHLIYATGFMFLISWRGYWQELIETLVWAHERTPIADLIRWKDKPVALSIVQARVVGLAHFSAGYILTYAAFLIASTSAKFG</sequence>
<organism>
    <name type="scientific">Tupiella akineta</name>
    <name type="common">Green alga</name>
    <name type="synonym">Pseudendoclonium akinetum</name>
    <dbReference type="NCBI Taxonomy" id="160070"/>
    <lineage>
        <taxon>Eukaryota</taxon>
        <taxon>Viridiplantae</taxon>
        <taxon>Chlorophyta</taxon>
        <taxon>Ulvophyceae</taxon>
        <taxon>OUU clade</taxon>
        <taxon>Ulotrichales</taxon>
        <taxon>Tupiellaceae</taxon>
        <taxon>Tupiella</taxon>
    </lineage>
</organism>
<accession>Q3ZIZ3</accession>
<comment type="function">
    <text evidence="1">PsaA and PsaB bind P700, the primary electron donor of photosystem I (PSI), as well as the electron acceptors A0, A1 and FX. PSI is a plastocyanin/cytochrome c6-ferredoxin oxidoreductase, converting photonic excitation into a charge separation, which transfers an electron from the donor P700 chlorophyll pair to the spectroscopically characterized acceptors A0, A1, FX, FA and FB in turn. Oxidized P700 is reduced on the lumenal side of the thylakoid membrane by plastocyanin or cytochrome c6.</text>
</comment>
<comment type="catalytic activity">
    <reaction evidence="1">
        <text>reduced [plastocyanin] + hnu + oxidized [2Fe-2S]-[ferredoxin] = oxidized [plastocyanin] + reduced [2Fe-2S]-[ferredoxin]</text>
        <dbReference type="Rhea" id="RHEA:30407"/>
        <dbReference type="Rhea" id="RHEA-COMP:10000"/>
        <dbReference type="Rhea" id="RHEA-COMP:10001"/>
        <dbReference type="Rhea" id="RHEA-COMP:10039"/>
        <dbReference type="Rhea" id="RHEA-COMP:10040"/>
        <dbReference type="ChEBI" id="CHEBI:29036"/>
        <dbReference type="ChEBI" id="CHEBI:30212"/>
        <dbReference type="ChEBI" id="CHEBI:33737"/>
        <dbReference type="ChEBI" id="CHEBI:33738"/>
        <dbReference type="ChEBI" id="CHEBI:49552"/>
        <dbReference type="EC" id="1.97.1.12"/>
    </reaction>
</comment>
<comment type="cofactor">
    <text evidence="1">P700 is a chlorophyll a/chlorophyll a' dimer, A0 is one or more chlorophyll a, A1 is one or both phylloquinones and FX is a shared 4Fe-4S iron-sulfur center.</text>
</comment>
<comment type="subunit">
    <text evidence="1">The PsaA/B heterodimer binds the P700 chlorophyll special pair and subsequent electron acceptors. PSI consists of a core antenna complex that captures photons, and an electron transfer chain that converts photonic excitation into a charge separation. The eukaryotic PSI reaction center is composed of at least 11 subunits.</text>
</comment>
<comment type="subcellular location">
    <subcellularLocation>
        <location>Plastid</location>
        <location>Chloroplast thylakoid membrane</location>
        <topology>Multi-pass membrane protein</topology>
    </subcellularLocation>
</comment>
<comment type="similarity">
    <text evidence="1">Belongs to the PsaA/PsaB family.</text>
</comment>
<geneLocation type="chloroplast"/>
<evidence type="ECO:0000255" key="1">
    <source>
        <dbReference type="HAMAP-Rule" id="MF_00482"/>
    </source>
</evidence>
<protein>
    <recommendedName>
        <fullName evidence="1">Photosystem I P700 chlorophyll a apoprotein A2</fullName>
        <ecNumber evidence="1">1.97.1.12</ecNumber>
    </recommendedName>
    <alternativeName>
        <fullName evidence="1">PSI-B</fullName>
    </alternativeName>
    <alternativeName>
        <fullName evidence="1">PsaB</fullName>
    </alternativeName>
</protein>
<proteinExistence type="inferred from homology"/>